<evidence type="ECO:0000255" key="1">
    <source>
        <dbReference type="HAMAP-Rule" id="MF_01132"/>
    </source>
</evidence>
<organism>
    <name type="scientific">Lactococcus lactis subsp. lactis (strain IL1403)</name>
    <name type="common">Streptococcus lactis</name>
    <dbReference type="NCBI Taxonomy" id="272623"/>
    <lineage>
        <taxon>Bacteria</taxon>
        <taxon>Bacillati</taxon>
        <taxon>Bacillota</taxon>
        <taxon>Bacilli</taxon>
        <taxon>Lactobacillales</taxon>
        <taxon>Streptococcaceae</taxon>
        <taxon>Lactococcus</taxon>
    </lineage>
</organism>
<sequence length="128" mass="14867">MIDLYLSPSCTSCRKARAWLQSHKVPFVEHNILTQPMTTNDLRHILTKTENGTEDIISTRSKVFQKLAVDVDNLTINELLDLVTEFPNLLRRPIITDSKHLQIGFNEDEIRAFLPREYRRAEMLSTID</sequence>
<gene>
    <name evidence="1" type="primary">spx1</name>
    <name type="ordered locus">LL0546</name>
    <name type="ORF">L132585</name>
</gene>
<dbReference type="EMBL" id="AE005176">
    <property type="protein sequence ID" value="AAK04644.1"/>
    <property type="molecule type" value="Genomic_DNA"/>
</dbReference>
<dbReference type="PIR" id="B86693">
    <property type="entry name" value="B86693"/>
</dbReference>
<dbReference type="RefSeq" id="NP_266702.1">
    <property type="nucleotide sequence ID" value="NC_002662.1"/>
</dbReference>
<dbReference type="SMR" id="Q9CI20"/>
<dbReference type="PaxDb" id="272623-L132585"/>
<dbReference type="EnsemblBacteria" id="AAK04644">
    <property type="protein sequence ID" value="AAK04644"/>
    <property type="gene ID" value="L132585"/>
</dbReference>
<dbReference type="KEGG" id="lla:L132585"/>
<dbReference type="PATRIC" id="fig|272623.7.peg.584"/>
<dbReference type="eggNOG" id="COG1393">
    <property type="taxonomic scope" value="Bacteria"/>
</dbReference>
<dbReference type="HOGENOM" id="CLU_116644_1_1_9"/>
<dbReference type="OrthoDB" id="9794155at2"/>
<dbReference type="Proteomes" id="UP000002196">
    <property type="component" value="Chromosome"/>
</dbReference>
<dbReference type="GO" id="GO:0005737">
    <property type="term" value="C:cytoplasm"/>
    <property type="evidence" value="ECO:0007669"/>
    <property type="project" value="UniProtKB-SubCell"/>
</dbReference>
<dbReference type="GO" id="GO:0045892">
    <property type="term" value="P:negative regulation of DNA-templated transcription"/>
    <property type="evidence" value="ECO:0007669"/>
    <property type="project" value="InterPro"/>
</dbReference>
<dbReference type="CDD" id="cd03032">
    <property type="entry name" value="ArsC_Spx"/>
    <property type="match status" value="1"/>
</dbReference>
<dbReference type="Gene3D" id="3.40.30.10">
    <property type="entry name" value="Glutaredoxin"/>
    <property type="match status" value="1"/>
</dbReference>
<dbReference type="HAMAP" id="MF_01132">
    <property type="entry name" value="Spx"/>
    <property type="match status" value="1"/>
</dbReference>
<dbReference type="InterPro" id="IPR006660">
    <property type="entry name" value="Arsenate_reductase-like"/>
</dbReference>
<dbReference type="InterPro" id="IPR023731">
    <property type="entry name" value="Spx"/>
</dbReference>
<dbReference type="InterPro" id="IPR036249">
    <property type="entry name" value="Thioredoxin-like_sf"/>
</dbReference>
<dbReference type="InterPro" id="IPR006504">
    <property type="entry name" value="Tscrpt_reg_Spx/MgsR"/>
</dbReference>
<dbReference type="NCBIfam" id="TIGR01617">
    <property type="entry name" value="arsC_related"/>
    <property type="match status" value="1"/>
</dbReference>
<dbReference type="NCBIfam" id="NF002459">
    <property type="entry name" value="PRK01655.1"/>
    <property type="match status" value="1"/>
</dbReference>
<dbReference type="PANTHER" id="PTHR30041">
    <property type="entry name" value="ARSENATE REDUCTASE"/>
    <property type="match status" value="1"/>
</dbReference>
<dbReference type="PANTHER" id="PTHR30041:SF7">
    <property type="entry name" value="GLOBAL TRANSCRIPTIONAL REGULATOR SPX"/>
    <property type="match status" value="1"/>
</dbReference>
<dbReference type="Pfam" id="PF03960">
    <property type="entry name" value="ArsC"/>
    <property type="match status" value="1"/>
</dbReference>
<dbReference type="SUPFAM" id="SSF52833">
    <property type="entry name" value="Thioredoxin-like"/>
    <property type="match status" value="1"/>
</dbReference>
<dbReference type="PROSITE" id="PS51353">
    <property type="entry name" value="ARSC"/>
    <property type="match status" value="1"/>
</dbReference>
<protein>
    <recommendedName>
        <fullName evidence="1">Global transcriptional regulator Spx 1</fullName>
    </recommendedName>
</protein>
<comment type="function">
    <text evidence="1">Global transcriptional regulator that plays a key role in stress response and exerts either positive or negative regulation of genes. Acts by interacting with the C-terminal domain of the alpha subunit of the RNA polymerase (RNAP). This interaction can enhance binding of RNAP to the promoter region of target genes and stimulate their transcription, or block interaction of RNAP with activator.</text>
</comment>
<comment type="subunit">
    <text evidence="1">Interacts with the C-terminal domain of the alpha subunit of the RNAP.</text>
</comment>
<comment type="subcellular location">
    <subcellularLocation>
        <location evidence="1">Cytoplasm</location>
    </subcellularLocation>
</comment>
<comment type="similarity">
    <text evidence="1">Belongs to the ArsC family. Spx subfamily.</text>
</comment>
<proteinExistence type="inferred from homology"/>
<keyword id="KW-0963">Cytoplasm</keyword>
<keyword id="KW-1015">Disulfide bond</keyword>
<keyword id="KW-0676">Redox-active center</keyword>
<keyword id="KW-1185">Reference proteome</keyword>
<keyword id="KW-0804">Transcription</keyword>
<keyword id="KW-0805">Transcription regulation</keyword>
<reference key="1">
    <citation type="journal article" date="2001" name="Genome Res.">
        <title>The complete genome sequence of the lactic acid bacterium Lactococcus lactis ssp. lactis IL1403.</title>
        <authorList>
            <person name="Bolotin A."/>
            <person name="Wincker P."/>
            <person name="Mauger S."/>
            <person name="Jaillon O."/>
            <person name="Malarme K."/>
            <person name="Weissenbach J."/>
            <person name="Ehrlich S.D."/>
            <person name="Sorokin A."/>
        </authorList>
    </citation>
    <scope>NUCLEOTIDE SEQUENCE [LARGE SCALE GENOMIC DNA]</scope>
    <source>
        <strain>IL1403</strain>
    </source>
</reference>
<accession>Q9CI20</accession>
<feature type="chain" id="PRO_0000162553" description="Global transcriptional regulator Spx 1">
    <location>
        <begin position="1"/>
        <end position="128"/>
    </location>
</feature>
<feature type="disulfide bond" description="Redox-active" evidence="1">
    <location>
        <begin position="10"/>
        <end position="13"/>
    </location>
</feature>
<name>SPX1_LACLA</name>